<dbReference type="EMBL" id="AP009178">
    <property type="protein sequence ID" value="BAF69498.1"/>
    <property type="molecule type" value="Genomic_DNA"/>
</dbReference>
<dbReference type="RefSeq" id="WP_012081761.1">
    <property type="nucleotide sequence ID" value="NC_009662.1"/>
</dbReference>
<dbReference type="SMR" id="A6Q1Y9"/>
<dbReference type="STRING" id="387092.NIS_0384"/>
<dbReference type="KEGG" id="nis:NIS_0384"/>
<dbReference type="eggNOG" id="COG1825">
    <property type="taxonomic scope" value="Bacteria"/>
</dbReference>
<dbReference type="HOGENOM" id="CLU_075939_2_2_7"/>
<dbReference type="InParanoid" id="A6Q1Y9"/>
<dbReference type="OrthoDB" id="5339138at2"/>
<dbReference type="Proteomes" id="UP000001118">
    <property type="component" value="Chromosome"/>
</dbReference>
<dbReference type="GO" id="GO:0022625">
    <property type="term" value="C:cytosolic large ribosomal subunit"/>
    <property type="evidence" value="ECO:0007669"/>
    <property type="project" value="TreeGrafter"/>
</dbReference>
<dbReference type="GO" id="GO:0008097">
    <property type="term" value="F:5S rRNA binding"/>
    <property type="evidence" value="ECO:0007669"/>
    <property type="project" value="InterPro"/>
</dbReference>
<dbReference type="GO" id="GO:0003735">
    <property type="term" value="F:structural constituent of ribosome"/>
    <property type="evidence" value="ECO:0007669"/>
    <property type="project" value="InterPro"/>
</dbReference>
<dbReference type="GO" id="GO:0006412">
    <property type="term" value="P:translation"/>
    <property type="evidence" value="ECO:0007669"/>
    <property type="project" value="UniProtKB-UniRule"/>
</dbReference>
<dbReference type="CDD" id="cd00495">
    <property type="entry name" value="Ribosomal_L25_TL5_CTC"/>
    <property type="match status" value="1"/>
</dbReference>
<dbReference type="Gene3D" id="2.170.120.20">
    <property type="entry name" value="Ribosomal protein L25, beta domain"/>
    <property type="match status" value="1"/>
</dbReference>
<dbReference type="Gene3D" id="2.40.240.10">
    <property type="entry name" value="Ribosomal Protein L25, Chain P"/>
    <property type="match status" value="1"/>
</dbReference>
<dbReference type="HAMAP" id="MF_01334">
    <property type="entry name" value="Ribosomal_bL25_CTC"/>
    <property type="match status" value="1"/>
</dbReference>
<dbReference type="InterPro" id="IPR020056">
    <property type="entry name" value="Rbsml_bL25/Gln-tRNA_synth_N"/>
</dbReference>
<dbReference type="InterPro" id="IPR011035">
    <property type="entry name" value="Ribosomal_bL25/Gln-tRNA_synth"/>
</dbReference>
<dbReference type="InterPro" id="IPR020057">
    <property type="entry name" value="Ribosomal_bL25_b-dom"/>
</dbReference>
<dbReference type="InterPro" id="IPR037121">
    <property type="entry name" value="Ribosomal_bL25_C"/>
</dbReference>
<dbReference type="InterPro" id="IPR001021">
    <property type="entry name" value="Ribosomal_bL25_long"/>
</dbReference>
<dbReference type="InterPro" id="IPR029751">
    <property type="entry name" value="Ribosomal_L25_dom"/>
</dbReference>
<dbReference type="InterPro" id="IPR020930">
    <property type="entry name" value="Ribosomal_uL5_bac-type"/>
</dbReference>
<dbReference type="NCBIfam" id="TIGR00731">
    <property type="entry name" value="bL25_bact_ctc"/>
    <property type="match status" value="1"/>
</dbReference>
<dbReference type="NCBIfam" id="NF004129">
    <property type="entry name" value="PRK05618.1-4"/>
    <property type="match status" value="1"/>
</dbReference>
<dbReference type="PANTHER" id="PTHR33284">
    <property type="entry name" value="RIBOSOMAL PROTEIN L25/GLN-TRNA SYNTHETASE, ANTI-CODON-BINDING DOMAIN-CONTAINING PROTEIN"/>
    <property type="match status" value="1"/>
</dbReference>
<dbReference type="PANTHER" id="PTHR33284:SF1">
    <property type="entry name" value="RIBOSOMAL PROTEIN L25_GLN-TRNA SYNTHETASE, ANTI-CODON-BINDING DOMAIN-CONTAINING PROTEIN"/>
    <property type="match status" value="1"/>
</dbReference>
<dbReference type="Pfam" id="PF01386">
    <property type="entry name" value="Ribosomal_L25p"/>
    <property type="match status" value="1"/>
</dbReference>
<dbReference type="Pfam" id="PF14693">
    <property type="entry name" value="Ribosomal_TL5_C"/>
    <property type="match status" value="1"/>
</dbReference>
<dbReference type="SUPFAM" id="SSF50715">
    <property type="entry name" value="Ribosomal protein L25-like"/>
    <property type="match status" value="1"/>
</dbReference>
<organism>
    <name type="scientific">Nitratiruptor sp. (strain SB155-2)</name>
    <dbReference type="NCBI Taxonomy" id="387092"/>
    <lineage>
        <taxon>Bacteria</taxon>
        <taxon>Pseudomonadati</taxon>
        <taxon>Campylobacterota</taxon>
        <taxon>Epsilonproteobacteria</taxon>
        <taxon>Nautiliales</taxon>
        <taxon>Nitratiruptoraceae</taxon>
        <taxon>Nitratiruptor</taxon>
    </lineage>
</organism>
<reference key="1">
    <citation type="journal article" date="2007" name="Proc. Natl. Acad. Sci. U.S.A.">
        <title>Deep-sea vent epsilon-proteobacterial genomes provide insights into emergence of pathogens.</title>
        <authorList>
            <person name="Nakagawa S."/>
            <person name="Takaki Y."/>
            <person name="Shimamura S."/>
            <person name="Reysenbach A.-L."/>
            <person name="Takai K."/>
            <person name="Horikoshi K."/>
        </authorList>
    </citation>
    <scope>NUCLEOTIDE SEQUENCE [LARGE SCALE GENOMIC DNA]</scope>
    <source>
        <strain>SB155-2</strain>
    </source>
</reference>
<feature type="chain" id="PRO_1000052909" description="Large ribosomal subunit protein bL25">
    <location>
        <begin position="1"/>
        <end position="178"/>
    </location>
</feature>
<comment type="function">
    <text evidence="1">This is one of the proteins that binds to the 5S RNA in the ribosome where it forms part of the central protuberance.</text>
</comment>
<comment type="subunit">
    <text evidence="1">Part of the 50S ribosomal subunit; part of the 5S rRNA/L5/L18/L25 subcomplex. Contacts the 5S rRNA. Binds to the 5S rRNA independently of L5 and L18.</text>
</comment>
<comment type="similarity">
    <text evidence="1">Belongs to the bacterial ribosomal protein bL25 family. CTC subfamily.</text>
</comment>
<accession>A6Q1Y9</accession>
<evidence type="ECO:0000255" key="1">
    <source>
        <dbReference type="HAMAP-Rule" id="MF_01334"/>
    </source>
</evidence>
<evidence type="ECO:0000305" key="2"/>
<sequence>MLEGIVRESTGKKATKALRRDGYLIANIYGKDFPNIHAAFKKGDFIRTVRHKEKLAFPVKVGDKELEVVVQEYQKDPVTYDLLHVDLMVAQPGVVTYYMVPIKTVGTPIGLKNKGVLVTSKRRIKVKGAIENIPDSITLDVSNLDVGDAILIRDIELPEGVEHMTAPHVAVVGVVKAK</sequence>
<gene>
    <name evidence="1" type="primary">rplY</name>
    <name evidence="1" type="synonym">ctc</name>
    <name type="ordered locus">NIS_0384</name>
</gene>
<proteinExistence type="inferred from homology"/>
<keyword id="KW-1185">Reference proteome</keyword>
<keyword id="KW-0687">Ribonucleoprotein</keyword>
<keyword id="KW-0689">Ribosomal protein</keyword>
<keyword id="KW-0694">RNA-binding</keyword>
<keyword id="KW-0699">rRNA-binding</keyword>
<name>RL25_NITSB</name>
<protein>
    <recommendedName>
        <fullName evidence="1">Large ribosomal subunit protein bL25</fullName>
    </recommendedName>
    <alternativeName>
        <fullName evidence="2">50S ribosomal protein L25</fullName>
    </alternativeName>
    <alternativeName>
        <fullName evidence="1">General stress protein CTC</fullName>
    </alternativeName>
</protein>